<feature type="chain" id="PRO_1000126977" description="Large ribosomal subunit protein bL9">
    <location>
        <begin position="1"/>
        <end position="149"/>
    </location>
</feature>
<gene>
    <name evidence="1" type="primary">rplI</name>
    <name type="ordered locus">Smlt3148</name>
</gene>
<sequence>MQLILLQKVTNLGNLGDLVDVKPGYGRNFLVPQGKAVPATESNKAEFEAKRAEYEAKAQAIHADAEGRKAKLEGASVTIAANASTEGKLYGSVGPRDIAEAFTAAGLPLEKSEVILGEGAFRNIGEYDVLVHLHADVETTVKVVVVAEA</sequence>
<protein>
    <recommendedName>
        <fullName evidence="1">Large ribosomal subunit protein bL9</fullName>
    </recommendedName>
    <alternativeName>
        <fullName evidence="2">50S ribosomal protein L9</fullName>
    </alternativeName>
</protein>
<comment type="function">
    <text evidence="1">Binds to the 23S rRNA.</text>
</comment>
<comment type="similarity">
    <text evidence="1">Belongs to the bacterial ribosomal protein bL9 family.</text>
</comment>
<evidence type="ECO:0000255" key="1">
    <source>
        <dbReference type="HAMAP-Rule" id="MF_00503"/>
    </source>
</evidence>
<evidence type="ECO:0000305" key="2"/>
<proteinExistence type="inferred from homology"/>
<keyword id="KW-1185">Reference proteome</keyword>
<keyword id="KW-0687">Ribonucleoprotein</keyword>
<keyword id="KW-0689">Ribosomal protein</keyword>
<keyword id="KW-0694">RNA-binding</keyword>
<keyword id="KW-0699">rRNA-binding</keyword>
<reference key="1">
    <citation type="journal article" date="2008" name="Genome Biol.">
        <title>The complete genome, comparative and functional analysis of Stenotrophomonas maltophilia reveals an organism heavily shielded by drug resistance determinants.</title>
        <authorList>
            <person name="Crossman L.C."/>
            <person name="Gould V.C."/>
            <person name="Dow J.M."/>
            <person name="Vernikos G.S."/>
            <person name="Okazaki A."/>
            <person name="Sebaihia M."/>
            <person name="Saunders D."/>
            <person name="Arrowsmith C."/>
            <person name="Carver T."/>
            <person name="Peters N."/>
            <person name="Adlem E."/>
            <person name="Kerhornou A."/>
            <person name="Lord A."/>
            <person name="Murphy L."/>
            <person name="Seeger K."/>
            <person name="Squares R."/>
            <person name="Rutter S."/>
            <person name="Quail M.A."/>
            <person name="Rajandream M.A."/>
            <person name="Harris D."/>
            <person name="Churcher C."/>
            <person name="Bentley S.D."/>
            <person name="Parkhill J."/>
            <person name="Thomson N.R."/>
            <person name="Avison M.B."/>
        </authorList>
    </citation>
    <scope>NUCLEOTIDE SEQUENCE [LARGE SCALE GENOMIC DNA]</scope>
    <source>
        <strain>K279a</strain>
    </source>
</reference>
<accession>B2FKJ7</accession>
<dbReference type="EMBL" id="AM743169">
    <property type="protein sequence ID" value="CAQ46593.1"/>
    <property type="molecule type" value="Genomic_DNA"/>
</dbReference>
<dbReference type="RefSeq" id="WP_005410227.1">
    <property type="nucleotide sequence ID" value="NC_010943.1"/>
</dbReference>
<dbReference type="SMR" id="B2FKJ7"/>
<dbReference type="EnsemblBacteria" id="CAQ46593">
    <property type="protein sequence ID" value="CAQ46593"/>
    <property type="gene ID" value="Smlt3148"/>
</dbReference>
<dbReference type="GeneID" id="93834090"/>
<dbReference type="KEGG" id="sml:Smlt3148"/>
<dbReference type="eggNOG" id="COG0359">
    <property type="taxonomic scope" value="Bacteria"/>
</dbReference>
<dbReference type="HOGENOM" id="CLU_078938_4_1_6"/>
<dbReference type="Proteomes" id="UP000008840">
    <property type="component" value="Chromosome"/>
</dbReference>
<dbReference type="GO" id="GO:1990904">
    <property type="term" value="C:ribonucleoprotein complex"/>
    <property type="evidence" value="ECO:0007669"/>
    <property type="project" value="UniProtKB-KW"/>
</dbReference>
<dbReference type="GO" id="GO:0005840">
    <property type="term" value="C:ribosome"/>
    <property type="evidence" value="ECO:0007669"/>
    <property type="project" value="UniProtKB-KW"/>
</dbReference>
<dbReference type="GO" id="GO:0019843">
    <property type="term" value="F:rRNA binding"/>
    <property type="evidence" value="ECO:0007669"/>
    <property type="project" value="UniProtKB-UniRule"/>
</dbReference>
<dbReference type="GO" id="GO:0003735">
    <property type="term" value="F:structural constituent of ribosome"/>
    <property type="evidence" value="ECO:0007669"/>
    <property type="project" value="InterPro"/>
</dbReference>
<dbReference type="GO" id="GO:0006412">
    <property type="term" value="P:translation"/>
    <property type="evidence" value="ECO:0007669"/>
    <property type="project" value="UniProtKB-UniRule"/>
</dbReference>
<dbReference type="FunFam" id="3.10.430.100:FF:000007">
    <property type="entry name" value="50S ribosomal protein L9"/>
    <property type="match status" value="1"/>
</dbReference>
<dbReference type="Gene3D" id="3.10.430.100">
    <property type="entry name" value="Ribosomal protein L9, C-terminal domain"/>
    <property type="match status" value="1"/>
</dbReference>
<dbReference type="Gene3D" id="3.40.5.10">
    <property type="entry name" value="Ribosomal protein L9, N-terminal domain"/>
    <property type="match status" value="1"/>
</dbReference>
<dbReference type="HAMAP" id="MF_00503">
    <property type="entry name" value="Ribosomal_bL9"/>
    <property type="match status" value="1"/>
</dbReference>
<dbReference type="InterPro" id="IPR000244">
    <property type="entry name" value="Ribosomal_bL9"/>
</dbReference>
<dbReference type="InterPro" id="IPR009027">
    <property type="entry name" value="Ribosomal_bL9/RNase_H1_N"/>
</dbReference>
<dbReference type="InterPro" id="IPR020594">
    <property type="entry name" value="Ribosomal_bL9_bac/chp"/>
</dbReference>
<dbReference type="InterPro" id="IPR020069">
    <property type="entry name" value="Ribosomal_bL9_C"/>
</dbReference>
<dbReference type="InterPro" id="IPR036791">
    <property type="entry name" value="Ribosomal_bL9_C_sf"/>
</dbReference>
<dbReference type="InterPro" id="IPR020070">
    <property type="entry name" value="Ribosomal_bL9_N"/>
</dbReference>
<dbReference type="InterPro" id="IPR036935">
    <property type="entry name" value="Ribosomal_bL9_N_sf"/>
</dbReference>
<dbReference type="NCBIfam" id="TIGR00158">
    <property type="entry name" value="L9"/>
    <property type="match status" value="1"/>
</dbReference>
<dbReference type="PANTHER" id="PTHR21368">
    <property type="entry name" value="50S RIBOSOMAL PROTEIN L9"/>
    <property type="match status" value="1"/>
</dbReference>
<dbReference type="Pfam" id="PF03948">
    <property type="entry name" value="Ribosomal_L9_C"/>
    <property type="match status" value="1"/>
</dbReference>
<dbReference type="Pfam" id="PF01281">
    <property type="entry name" value="Ribosomal_L9_N"/>
    <property type="match status" value="1"/>
</dbReference>
<dbReference type="SUPFAM" id="SSF55658">
    <property type="entry name" value="L9 N-domain-like"/>
    <property type="match status" value="1"/>
</dbReference>
<dbReference type="SUPFAM" id="SSF55653">
    <property type="entry name" value="Ribosomal protein L9 C-domain"/>
    <property type="match status" value="1"/>
</dbReference>
<dbReference type="PROSITE" id="PS00651">
    <property type="entry name" value="RIBOSOMAL_L9"/>
    <property type="match status" value="1"/>
</dbReference>
<organism>
    <name type="scientific">Stenotrophomonas maltophilia (strain K279a)</name>
    <dbReference type="NCBI Taxonomy" id="522373"/>
    <lineage>
        <taxon>Bacteria</taxon>
        <taxon>Pseudomonadati</taxon>
        <taxon>Pseudomonadota</taxon>
        <taxon>Gammaproteobacteria</taxon>
        <taxon>Lysobacterales</taxon>
        <taxon>Lysobacteraceae</taxon>
        <taxon>Stenotrophomonas</taxon>
        <taxon>Stenotrophomonas maltophilia group</taxon>
    </lineage>
</organism>
<name>RL9_STRMK</name>